<sequence length="205" mass="23729">MGRNPLIIGVTGRIASGKDTVSKIISNKYGFYEINADKLGHSVLHEKKEEIVKIFGQKILNTKNEIDKLLLRNLVFNDNKELKKLESVSHPVILSKIKKILIQNQSTKIIINAALLFKMNLEKLCDYIIVLKAKNSIIKNRLSYSIPNIDSNMINKILKIQKDIFFEKNIINLKIINIINNKNYAYLEKEIEKKMQGIINYERFE</sequence>
<evidence type="ECO:0000255" key="1">
    <source>
        <dbReference type="HAMAP-Rule" id="MF_00376"/>
    </source>
</evidence>
<evidence type="ECO:0000305" key="2"/>
<comment type="function">
    <text evidence="1">Catalyzes the phosphorylation of the 3'-hydroxyl group of dephosphocoenzyme A to form coenzyme A.</text>
</comment>
<comment type="catalytic activity">
    <reaction evidence="1">
        <text>3'-dephospho-CoA + ATP = ADP + CoA + H(+)</text>
        <dbReference type="Rhea" id="RHEA:18245"/>
        <dbReference type="ChEBI" id="CHEBI:15378"/>
        <dbReference type="ChEBI" id="CHEBI:30616"/>
        <dbReference type="ChEBI" id="CHEBI:57287"/>
        <dbReference type="ChEBI" id="CHEBI:57328"/>
        <dbReference type="ChEBI" id="CHEBI:456216"/>
        <dbReference type="EC" id="2.7.1.24"/>
    </reaction>
</comment>
<comment type="pathway">
    <text evidence="1">Cofactor biosynthesis; coenzyme A biosynthesis; CoA from (R)-pantothenate: step 5/5.</text>
</comment>
<comment type="subcellular location">
    <subcellularLocation>
        <location evidence="1">Cytoplasm</location>
    </subcellularLocation>
</comment>
<comment type="similarity">
    <text evidence="1 2">Belongs to the CoaE family.</text>
</comment>
<feature type="chain" id="PRO_0000172913" description="Dephospho-CoA kinase">
    <location>
        <begin position="1"/>
        <end position="205"/>
    </location>
</feature>
<feature type="domain" description="DPCK" evidence="1">
    <location>
        <begin position="7"/>
        <end position="205"/>
    </location>
</feature>
<feature type="binding site" evidence="1">
    <location>
        <begin position="15"/>
        <end position="20"/>
    </location>
    <ligand>
        <name>ATP</name>
        <dbReference type="ChEBI" id="CHEBI:30616"/>
    </ligand>
</feature>
<reference key="1">
    <citation type="journal article" date="1997" name="Nature">
        <title>Genomic sequence of a Lyme disease spirochaete, Borrelia burgdorferi.</title>
        <authorList>
            <person name="Fraser C.M."/>
            <person name="Casjens S."/>
            <person name="Huang W.M."/>
            <person name="Sutton G.G."/>
            <person name="Clayton R.A."/>
            <person name="Lathigra R."/>
            <person name="White O."/>
            <person name="Ketchum K.A."/>
            <person name="Dodson R.J."/>
            <person name="Hickey E.K."/>
            <person name="Gwinn M.L."/>
            <person name="Dougherty B.A."/>
            <person name="Tomb J.-F."/>
            <person name="Fleischmann R.D."/>
            <person name="Richardson D.L."/>
            <person name="Peterson J.D."/>
            <person name="Kerlavage A.R."/>
            <person name="Quackenbush J."/>
            <person name="Salzberg S.L."/>
            <person name="Hanson M."/>
            <person name="van Vugt R."/>
            <person name="Palmer N."/>
            <person name="Adams M.D."/>
            <person name="Gocayne J.D."/>
            <person name="Weidman J.F."/>
            <person name="Utterback T.R."/>
            <person name="Watthey L."/>
            <person name="McDonald L.A."/>
            <person name="Artiach P."/>
            <person name="Bowman C."/>
            <person name="Garland S.A."/>
            <person name="Fujii C."/>
            <person name="Cotton M.D."/>
            <person name="Horst K."/>
            <person name="Roberts K.M."/>
            <person name="Hatch B."/>
            <person name="Smith H.O."/>
            <person name="Venter J.C."/>
        </authorList>
    </citation>
    <scope>NUCLEOTIDE SEQUENCE [LARGE SCALE GENOMIC DNA]</scope>
    <source>
        <strain>ATCC 35210 / DSM 4680 / CIP 102532 / B31</strain>
    </source>
</reference>
<dbReference type="EC" id="2.7.1.24" evidence="1"/>
<dbReference type="EMBL" id="AE000783">
    <property type="protein sequence ID" value="AAC66910.1"/>
    <property type="molecule type" value="Genomic_DNA"/>
</dbReference>
<dbReference type="PIR" id="B70168">
    <property type="entry name" value="B70168"/>
</dbReference>
<dbReference type="RefSeq" id="NP_212681.1">
    <property type="nucleotide sequence ID" value="NC_001318.1"/>
</dbReference>
<dbReference type="RefSeq" id="WP_002658855.1">
    <property type="nucleotide sequence ID" value="NC_001318.1"/>
</dbReference>
<dbReference type="SMR" id="O51497"/>
<dbReference type="STRING" id="224326.BB_0547"/>
<dbReference type="PaxDb" id="224326-BB_0547"/>
<dbReference type="EnsemblBacteria" id="AAC66910">
    <property type="protein sequence ID" value="AAC66910"/>
    <property type="gene ID" value="BB_0547"/>
</dbReference>
<dbReference type="KEGG" id="bbu:BB_0547"/>
<dbReference type="PATRIC" id="fig|224326.49.peg.938"/>
<dbReference type="HOGENOM" id="CLU_057180_2_2_12"/>
<dbReference type="OrthoDB" id="359604at2"/>
<dbReference type="UniPathway" id="UPA00241">
    <property type="reaction ID" value="UER00356"/>
</dbReference>
<dbReference type="Proteomes" id="UP000001807">
    <property type="component" value="Chromosome"/>
</dbReference>
<dbReference type="GO" id="GO:0005737">
    <property type="term" value="C:cytoplasm"/>
    <property type="evidence" value="ECO:0007669"/>
    <property type="project" value="UniProtKB-SubCell"/>
</dbReference>
<dbReference type="GO" id="GO:0005524">
    <property type="term" value="F:ATP binding"/>
    <property type="evidence" value="ECO:0007669"/>
    <property type="project" value="UniProtKB-UniRule"/>
</dbReference>
<dbReference type="GO" id="GO:0004140">
    <property type="term" value="F:dephospho-CoA kinase activity"/>
    <property type="evidence" value="ECO:0007669"/>
    <property type="project" value="UniProtKB-UniRule"/>
</dbReference>
<dbReference type="GO" id="GO:0015937">
    <property type="term" value="P:coenzyme A biosynthetic process"/>
    <property type="evidence" value="ECO:0007669"/>
    <property type="project" value="UniProtKB-UniRule"/>
</dbReference>
<dbReference type="CDD" id="cd02022">
    <property type="entry name" value="DPCK"/>
    <property type="match status" value="1"/>
</dbReference>
<dbReference type="Gene3D" id="3.40.50.300">
    <property type="entry name" value="P-loop containing nucleotide triphosphate hydrolases"/>
    <property type="match status" value="1"/>
</dbReference>
<dbReference type="HAMAP" id="MF_00376">
    <property type="entry name" value="Dephospho_CoA_kinase"/>
    <property type="match status" value="1"/>
</dbReference>
<dbReference type="InterPro" id="IPR001977">
    <property type="entry name" value="Depp_CoAkinase"/>
</dbReference>
<dbReference type="InterPro" id="IPR027417">
    <property type="entry name" value="P-loop_NTPase"/>
</dbReference>
<dbReference type="NCBIfam" id="TIGR00152">
    <property type="entry name" value="dephospho-CoA kinase"/>
    <property type="match status" value="1"/>
</dbReference>
<dbReference type="PANTHER" id="PTHR10695:SF46">
    <property type="entry name" value="BIFUNCTIONAL COENZYME A SYNTHASE-RELATED"/>
    <property type="match status" value="1"/>
</dbReference>
<dbReference type="PANTHER" id="PTHR10695">
    <property type="entry name" value="DEPHOSPHO-COA KINASE-RELATED"/>
    <property type="match status" value="1"/>
</dbReference>
<dbReference type="Pfam" id="PF01121">
    <property type="entry name" value="CoaE"/>
    <property type="match status" value="1"/>
</dbReference>
<dbReference type="SUPFAM" id="SSF52540">
    <property type="entry name" value="P-loop containing nucleoside triphosphate hydrolases"/>
    <property type="match status" value="1"/>
</dbReference>
<dbReference type="PROSITE" id="PS51219">
    <property type="entry name" value="DPCK"/>
    <property type="match status" value="1"/>
</dbReference>
<protein>
    <recommendedName>
        <fullName evidence="1">Dephospho-CoA kinase</fullName>
        <ecNumber evidence="1">2.7.1.24</ecNumber>
    </recommendedName>
    <alternativeName>
        <fullName evidence="1">Dephosphocoenzyme A kinase</fullName>
    </alternativeName>
</protein>
<organism>
    <name type="scientific">Borreliella burgdorferi (strain ATCC 35210 / DSM 4680 / CIP 102532 / B31)</name>
    <name type="common">Borrelia burgdorferi</name>
    <dbReference type="NCBI Taxonomy" id="224326"/>
    <lineage>
        <taxon>Bacteria</taxon>
        <taxon>Pseudomonadati</taxon>
        <taxon>Spirochaetota</taxon>
        <taxon>Spirochaetia</taxon>
        <taxon>Spirochaetales</taxon>
        <taxon>Borreliaceae</taxon>
        <taxon>Borreliella</taxon>
    </lineage>
</organism>
<keyword id="KW-0067">ATP-binding</keyword>
<keyword id="KW-0173">Coenzyme A biosynthesis</keyword>
<keyword id="KW-0963">Cytoplasm</keyword>
<keyword id="KW-0418">Kinase</keyword>
<keyword id="KW-0547">Nucleotide-binding</keyword>
<keyword id="KW-1185">Reference proteome</keyword>
<keyword id="KW-0808">Transferase</keyword>
<proteinExistence type="inferred from homology"/>
<accession>O51497</accession>
<gene>
    <name evidence="1" type="primary">coaE</name>
    <name type="ordered locus">BB_0547</name>
</gene>
<name>COAE_BORBU</name>